<dbReference type="EMBL" id="BX284605">
    <property type="protein sequence ID" value="CCD63661.2"/>
    <property type="molecule type" value="Genomic_DNA"/>
</dbReference>
<dbReference type="PIR" id="T34255">
    <property type="entry name" value="T34255"/>
</dbReference>
<dbReference type="RefSeq" id="NP_505155.2">
    <property type="nucleotide sequence ID" value="NM_072754.10"/>
</dbReference>
<dbReference type="SMR" id="Q20157"/>
<dbReference type="BioGRID" id="44259">
    <property type="interactions" value="1"/>
</dbReference>
<dbReference type="FunCoup" id="Q20157">
    <property type="interactions" value="2325"/>
</dbReference>
<dbReference type="STRING" id="6239.F38E1.9.1"/>
<dbReference type="PaxDb" id="6239-F38E1.9"/>
<dbReference type="PeptideAtlas" id="Q20157"/>
<dbReference type="EnsemblMetazoa" id="F38E1.9.1">
    <property type="protein sequence ID" value="F38E1.9.1"/>
    <property type="gene ID" value="WBGene00018181"/>
</dbReference>
<dbReference type="GeneID" id="179218"/>
<dbReference type="KEGG" id="cel:CELE_F38E1.9"/>
<dbReference type="UCSC" id="F38E1.9">
    <property type="organism name" value="c. elegans"/>
</dbReference>
<dbReference type="AGR" id="WB:WBGene00018181"/>
<dbReference type="CTD" id="179218"/>
<dbReference type="WormBase" id="F38E1.9">
    <property type="protein sequence ID" value="CE47834"/>
    <property type="gene ID" value="WBGene00018181"/>
    <property type="gene designation" value="mpdu-1"/>
</dbReference>
<dbReference type="eggNOG" id="KOG3211">
    <property type="taxonomic scope" value="Eukaryota"/>
</dbReference>
<dbReference type="GeneTree" id="ENSGT00940000153916"/>
<dbReference type="HOGENOM" id="CLU_053568_2_0_1"/>
<dbReference type="InParanoid" id="Q20157"/>
<dbReference type="OMA" id="LQVLYYW"/>
<dbReference type="OrthoDB" id="271506at2759"/>
<dbReference type="PhylomeDB" id="Q20157"/>
<dbReference type="Reactome" id="R-CEL-446193">
    <property type="pathway name" value="Biosynthesis of the N-glycan precursor (dolichol lipid-linked oligosaccharide, LLO) and transfer to a nascent protein"/>
</dbReference>
<dbReference type="PRO" id="PR:Q20157"/>
<dbReference type="Proteomes" id="UP000001940">
    <property type="component" value="Chromosome V"/>
</dbReference>
<dbReference type="Bgee" id="WBGene00018181">
    <property type="expression patterns" value="Expressed in germ line (C elegans) and 4 other cell types or tissues"/>
</dbReference>
<dbReference type="GO" id="GO:0016020">
    <property type="term" value="C:membrane"/>
    <property type="evidence" value="ECO:0007669"/>
    <property type="project" value="UniProtKB-SubCell"/>
</dbReference>
<dbReference type="GO" id="GO:0036498">
    <property type="term" value="P:IRE1-mediated unfolded protein response"/>
    <property type="evidence" value="ECO:0007007"/>
    <property type="project" value="WormBase"/>
</dbReference>
<dbReference type="GO" id="GO:0009312">
    <property type="term" value="P:oligosaccharide biosynthetic process"/>
    <property type="evidence" value="ECO:0000318"/>
    <property type="project" value="GO_Central"/>
</dbReference>
<dbReference type="FunFam" id="1.20.1280.290:FF:000006">
    <property type="entry name" value="mannose-P-dolichol utilization defect 1 protein"/>
    <property type="match status" value="1"/>
</dbReference>
<dbReference type="Gene3D" id="1.20.1280.290">
    <property type="match status" value="2"/>
</dbReference>
<dbReference type="InterPro" id="IPR016817">
    <property type="entry name" value="MannP-dilichol_defect-1"/>
</dbReference>
<dbReference type="InterPro" id="IPR006603">
    <property type="entry name" value="PQ-loop_rpt"/>
</dbReference>
<dbReference type="PANTHER" id="PTHR12226">
    <property type="entry name" value="MANNOSE-P-DOLICHOL UTILIZATION DEFECT 1 LEC35 -RELATED"/>
    <property type="match status" value="1"/>
</dbReference>
<dbReference type="PANTHER" id="PTHR12226:SF2">
    <property type="entry name" value="MANNOSE-P-DOLICHOL UTILIZATION DEFECT 1 PROTEIN"/>
    <property type="match status" value="1"/>
</dbReference>
<dbReference type="Pfam" id="PF04193">
    <property type="entry name" value="PQ-loop"/>
    <property type="match status" value="2"/>
</dbReference>
<dbReference type="PIRSF" id="PIRSF023381">
    <property type="entry name" value="MannP-dilichol_defect-1p"/>
    <property type="match status" value="1"/>
</dbReference>
<dbReference type="SMART" id="SM00679">
    <property type="entry name" value="CTNS"/>
    <property type="match status" value="2"/>
</dbReference>
<feature type="chain" id="PRO_0000221036" description="Mannose-P-dolichol utilization defect 1 protein homolog">
    <location>
        <begin position="1"/>
        <end position="242"/>
    </location>
</feature>
<feature type="transmembrane region" description="Helical" evidence="1">
    <location>
        <begin position="40"/>
        <end position="60"/>
    </location>
</feature>
<feature type="transmembrane region" description="Helical" evidence="1">
    <location>
        <begin position="68"/>
        <end position="88"/>
    </location>
</feature>
<feature type="transmembrane region" description="Helical" evidence="1">
    <location>
        <begin position="98"/>
        <end position="118"/>
    </location>
</feature>
<feature type="transmembrane region" description="Helical" evidence="1">
    <location>
        <begin position="120"/>
        <end position="140"/>
    </location>
</feature>
<feature type="transmembrane region" description="Helical" evidence="1">
    <location>
        <begin position="148"/>
        <end position="168"/>
    </location>
</feature>
<feature type="transmembrane region" description="Helical" evidence="1">
    <location>
        <begin position="180"/>
        <end position="200"/>
    </location>
</feature>
<feature type="transmembrane region" description="Helical" evidence="1">
    <location>
        <begin position="207"/>
        <end position="227"/>
    </location>
</feature>
<feature type="domain" description="PQ-loop 1">
    <location>
        <begin position="37"/>
        <end position="95"/>
    </location>
</feature>
<feature type="domain" description="PQ-loop 2">
    <location>
        <begin position="152"/>
        <end position="202"/>
    </location>
</feature>
<keyword id="KW-0472">Membrane</keyword>
<keyword id="KW-1185">Reference proteome</keyword>
<keyword id="KW-0677">Repeat</keyword>
<keyword id="KW-0812">Transmembrane</keyword>
<keyword id="KW-1133">Transmembrane helix</keyword>
<keyword id="KW-0813">Transport</keyword>
<reference key="1">
    <citation type="journal article" date="1998" name="Science">
        <title>Genome sequence of the nematode C. elegans: a platform for investigating biology.</title>
        <authorList>
            <consortium name="The C. elegans sequencing consortium"/>
        </authorList>
    </citation>
    <scope>NUCLEOTIDE SEQUENCE [LARGE SCALE GENOMIC DNA]</scope>
    <source>
        <strain>Bristol N2</strain>
    </source>
</reference>
<gene>
    <name evidence="3" type="primary">mpdu-1</name>
    <name evidence="3" type="ORF">F38E1.9</name>
</gene>
<sequence>MSKIMNDIIQSLFPGNCFEELLINFNFFHPTCPKAVLSRGLGFAITLGSILLFVPQILKIQAARSAQGISAASQLLALVGAIGTASYSYRSGFVFSGWGDSFFVAVQLVIIILQIFLFSGQTMLSVGFLGIVSAVAYGVVSKSIPMQTLTAVQTAGIPIVVVSKLLQISQNYRAQSTGQLSLISVFLQFAGTLARVFTSVQDTGDMLLIVSYSTAAVLNGLIFAQFFMYWSHSESAAKKKRN</sequence>
<evidence type="ECO:0000255" key="1"/>
<evidence type="ECO:0000305" key="2"/>
<evidence type="ECO:0000312" key="3">
    <source>
        <dbReference type="WormBase" id="F38E1.9"/>
    </source>
</evidence>
<protein>
    <recommendedName>
        <fullName>Mannose-P-dolichol utilization defect 1 protein homolog</fullName>
    </recommendedName>
</protein>
<comment type="subcellular location">
    <subcellularLocation>
        <location evidence="2">Membrane</location>
        <topology evidence="2">Multi-pass membrane protein</topology>
    </subcellularLocation>
</comment>
<comment type="similarity">
    <text evidence="2">Belongs to the MPDU1 (TC 2.A.43.3) family.</text>
</comment>
<name>MPU1_CAEEL</name>
<organism>
    <name type="scientific">Caenorhabditis elegans</name>
    <dbReference type="NCBI Taxonomy" id="6239"/>
    <lineage>
        <taxon>Eukaryota</taxon>
        <taxon>Metazoa</taxon>
        <taxon>Ecdysozoa</taxon>
        <taxon>Nematoda</taxon>
        <taxon>Chromadorea</taxon>
        <taxon>Rhabditida</taxon>
        <taxon>Rhabditina</taxon>
        <taxon>Rhabditomorpha</taxon>
        <taxon>Rhabditoidea</taxon>
        <taxon>Rhabditidae</taxon>
        <taxon>Peloderinae</taxon>
        <taxon>Caenorhabditis</taxon>
    </lineage>
</organism>
<proteinExistence type="inferred from homology"/>
<accession>Q20157</accession>